<keyword id="KW-0002">3D-structure</keyword>
<keyword id="KW-0025">Alternative splicing</keyword>
<keyword id="KW-0067">ATP-binding</keyword>
<keyword id="KW-0966">Cell projection</keyword>
<keyword id="KW-0969">Cilium</keyword>
<keyword id="KW-0963">Cytoplasm</keyword>
<keyword id="KW-0206">Cytoskeleton</keyword>
<keyword id="KW-0217">Developmental protein</keyword>
<keyword id="KW-0221">Differentiation</keyword>
<keyword id="KW-0436">Ligase</keyword>
<keyword id="KW-0460">Magnesium</keyword>
<keyword id="KW-0479">Metal-binding</keyword>
<keyword id="KW-0493">Microtubule</keyword>
<keyword id="KW-0524">Neurogenesis</keyword>
<keyword id="KW-0547">Nucleotide-binding</keyword>
<keyword id="KW-1267">Proteomics identification</keyword>
<keyword id="KW-1185">Reference proteome</keyword>
<feature type="chain" id="PRO_0000212444" description="Tubulin polyglutamylase TTLL7">
    <location>
        <begin position="1"/>
        <end position="887"/>
    </location>
</feature>
<feature type="domain" description="TTL" evidence="4">
    <location>
        <begin position="38"/>
        <end position="390"/>
    </location>
</feature>
<feature type="region of interest" description="Disordered" evidence="5">
    <location>
        <begin position="1"/>
        <end position="21"/>
    </location>
</feature>
<feature type="region of interest" description="c-MTBD region" evidence="7">
    <location>
        <begin position="388"/>
        <end position="450"/>
    </location>
</feature>
<feature type="region of interest" description="Disordered" evidence="5">
    <location>
        <begin position="519"/>
        <end position="621"/>
    </location>
</feature>
<feature type="region of interest" description="Disordered" evidence="5">
    <location>
        <begin position="651"/>
        <end position="676"/>
    </location>
</feature>
<feature type="compositionally biased region" description="Low complexity" evidence="5">
    <location>
        <begin position="548"/>
        <end position="560"/>
    </location>
</feature>
<feature type="compositionally biased region" description="Polar residues" evidence="5">
    <location>
        <begin position="593"/>
        <end position="621"/>
    </location>
</feature>
<feature type="compositionally biased region" description="Polar residues" evidence="5">
    <location>
        <begin position="656"/>
        <end position="670"/>
    </location>
</feature>
<feature type="binding site" evidence="1">
    <location>
        <position position="160"/>
    </location>
    <ligand>
        <name>ATP</name>
        <dbReference type="ChEBI" id="CHEBI:30616"/>
    </ligand>
</feature>
<feature type="binding site" evidence="1">
    <location>
        <begin position="166"/>
        <end position="167"/>
    </location>
    <ligand>
        <name>ATP</name>
        <dbReference type="ChEBI" id="CHEBI:30616"/>
    </ligand>
</feature>
<feature type="binding site" evidence="7">
    <location>
        <begin position="188"/>
        <end position="191"/>
    </location>
    <ligand>
        <name>ATP</name>
        <dbReference type="ChEBI" id="CHEBI:30616"/>
    </ligand>
</feature>
<feature type="binding site" evidence="7">
    <location>
        <begin position="201"/>
        <end position="203"/>
    </location>
    <ligand>
        <name>ATP</name>
        <dbReference type="ChEBI" id="CHEBI:30616"/>
    </ligand>
</feature>
<feature type="binding site" evidence="1">
    <location>
        <position position="227"/>
    </location>
    <ligand>
        <name>L-glutamate</name>
        <dbReference type="ChEBI" id="CHEBI:29985"/>
    </ligand>
</feature>
<feature type="binding site" evidence="1">
    <location>
        <begin position="249"/>
        <end position="250"/>
    </location>
    <ligand>
        <name>ATP</name>
        <dbReference type="ChEBI" id="CHEBI:30616"/>
    </ligand>
</feature>
<feature type="binding site" evidence="1">
    <location>
        <position position="251"/>
    </location>
    <ligand>
        <name>L-glutamate</name>
        <dbReference type="ChEBI" id="CHEBI:29985"/>
    </ligand>
</feature>
<feature type="binding site" evidence="1">
    <location>
        <position position="252"/>
    </location>
    <ligand>
        <name>L-glutamate</name>
        <dbReference type="ChEBI" id="CHEBI:29985"/>
    </ligand>
</feature>
<feature type="binding site" evidence="1">
    <location>
        <position position="271"/>
    </location>
    <ligand>
        <name>L-glutamate</name>
        <dbReference type="ChEBI" id="CHEBI:29985"/>
    </ligand>
</feature>
<feature type="binding site" evidence="1">
    <location>
        <position position="336"/>
    </location>
    <ligand>
        <name>Mg(2+)</name>
        <dbReference type="ChEBI" id="CHEBI:18420"/>
        <label>1</label>
    </ligand>
</feature>
<feature type="binding site" evidence="1">
    <location>
        <position position="349"/>
    </location>
    <ligand>
        <name>Mg(2+)</name>
        <dbReference type="ChEBI" id="CHEBI:18420"/>
        <label>1</label>
    </ligand>
</feature>
<feature type="binding site" evidence="1">
    <location>
        <position position="349"/>
    </location>
    <ligand>
        <name>Mg(2+)</name>
        <dbReference type="ChEBI" id="CHEBI:18420"/>
        <label>2</label>
    </ligand>
</feature>
<feature type="binding site" evidence="1">
    <location>
        <position position="351"/>
    </location>
    <ligand>
        <name>Mg(2+)</name>
        <dbReference type="ChEBI" id="CHEBI:18420"/>
        <label>2</label>
    </ligand>
</feature>
<feature type="binding site" evidence="1">
    <location>
        <position position="367"/>
    </location>
    <ligand>
        <name>L-glutamate</name>
        <dbReference type="ChEBI" id="CHEBI:29985"/>
    </ligand>
</feature>
<feature type="site" description="Binds negatively charged residues of beta-tubulin C-terminal tails" evidence="7">
    <location>
        <position position="106"/>
    </location>
</feature>
<feature type="site" description="Binds negatively charged residues of beta-tubulin C-terminal tails" evidence="7">
    <location>
        <position position="352"/>
    </location>
</feature>
<feature type="splice variant" id="VSP_015199" description="In isoform 2." evidence="9">
    <original>SESLR</original>
    <variation>IILAQ</variation>
    <location>
        <begin position="665"/>
        <end position="669"/>
    </location>
</feature>
<feature type="splice variant" id="VSP_015200" description="In isoform 2." evidence="9">
    <location>
        <begin position="670"/>
        <end position="887"/>
    </location>
</feature>
<feature type="splice variant" id="VSP_015201" description="In isoform 3." evidence="8">
    <original>SS</original>
    <variation>YV</variation>
    <location>
        <begin position="791"/>
        <end position="792"/>
    </location>
</feature>
<feature type="splice variant" id="VSP_015202" description="In isoform 3." evidence="8">
    <location>
        <begin position="793"/>
        <end position="887"/>
    </location>
</feature>
<feature type="mutagenesis site" description="Nearly abolished polyglutamylase activity." evidence="7">
    <original>R</original>
    <variation>E</variation>
    <location>
        <position position="106"/>
    </location>
</feature>
<feature type="mutagenesis site" description="70% decreased polyglutamylase activity." evidence="7">
    <original>NYVK</original>
    <variation>EYVE</variation>
    <location>
        <begin position="143"/>
        <end position="146"/>
    </location>
</feature>
<feature type="mutagenesis site" description="Decreased polyglutamylase activity." evidence="7">
    <original>K</original>
    <variation>E</variation>
    <location>
        <position position="178"/>
    </location>
</feature>
<feature type="mutagenesis site" description="Nearly abolished polyglutamylase activity." evidence="7">
    <original>R</original>
    <variation>E</variation>
    <location>
        <position position="205"/>
    </location>
</feature>
<feature type="mutagenesis site" description="Nearly abolished polyglutamylase activity." evidence="7">
    <original>R</original>
    <variation>E</variation>
    <location>
        <position position="227"/>
    </location>
</feature>
<feature type="mutagenesis site" description="Nearly abolished polyglutamylase activity." evidence="7">
    <original>K</original>
    <variation>E</variation>
    <location>
        <position position="271"/>
    </location>
</feature>
<feature type="mutagenesis site" description="Loss of polyglutamylase activity." evidence="7">
    <original>E</original>
    <variation>Q</variation>
    <location>
        <position position="349"/>
    </location>
</feature>
<feature type="mutagenesis site" description="Nearly abolished polyglutamylase activity." evidence="7">
    <original>R</original>
    <variation>A</variation>
    <variation>E</variation>
    <location>
        <position position="352"/>
    </location>
</feature>
<feature type="mutagenesis site" description="45% decreased binding to microtubules. Decreased polyglutamylase activity. 76% decreased binding to microtubules; when associated with 425-E--E-427." evidence="7">
    <original>KRRNLAKQK</original>
    <variation>EEENLAEQE</variation>
    <location>
        <begin position="385"/>
        <end position="393"/>
    </location>
</feature>
<feature type="mutagenesis site" description="76% decreased binding to microtubules; when associated with 385-E--E-393." evidence="7">
    <original>RRK</original>
    <variation>EEE</variation>
    <location>
        <begin position="425"/>
        <end position="427"/>
    </location>
</feature>
<feature type="mutagenesis site" description="40% decreased polyglutamylase activity." evidence="7">
    <original>FQTF</original>
    <variation>AQTA</variation>
    <location>
        <begin position="477"/>
        <end position="480"/>
    </location>
</feature>
<feature type="mutagenesis site" description="69% decreased polyglutamylase activity." evidence="7">
    <original>RELNNPLKRMK</original>
    <variation>DELNNPLDDMD</variation>
    <location>
        <begin position="490"/>
        <end position="500"/>
    </location>
</feature>
<feature type="sequence conflict" description="In Ref. 1; AAO37763." evidence="10" ref="1">
    <original>P</original>
    <variation>S</variation>
    <location>
        <position position="13"/>
    </location>
</feature>
<feature type="sequence conflict" description="In Ref. 2; BAC86695." evidence="10" ref="2">
    <original>T</original>
    <variation>A</variation>
    <location>
        <position position="48"/>
    </location>
</feature>
<feature type="sequence conflict" description="In Ref. 4; AAH60878." evidence="10" ref="4">
    <original>L</original>
    <variation>M</variation>
    <location>
        <position position="298"/>
    </location>
</feature>
<feature type="sequence conflict" description="In Ref. 4; AAH60878." evidence="10" ref="4">
    <original>Q</original>
    <variation>R</variation>
    <location>
        <position position="489"/>
    </location>
</feature>
<feature type="sequence conflict" description="In Ref. 4; AAH60878." evidence="10" ref="4">
    <original>N</original>
    <variation>D</variation>
    <location>
        <position position="493"/>
    </location>
</feature>
<feature type="sequence conflict" description="In Ref. 4; AAH60878." evidence="10" ref="4">
    <original>R</original>
    <variation>G</variation>
    <location>
        <position position="575"/>
    </location>
</feature>
<feature type="sequence conflict" description="In Ref. 2; BAB15526." evidence="10" ref="2">
    <original>S</original>
    <variation>F</variation>
    <location>
        <position position="609"/>
    </location>
</feature>
<feature type="sequence conflict" description="In Ref. 4; AAH60878." evidence="10" ref="4">
    <original>E</original>
    <variation>G</variation>
    <location>
        <position position="677"/>
    </location>
</feature>
<feature type="strand" evidence="14">
    <location>
        <begin position="42"/>
        <end position="47"/>
    </location>
</feature>
<feature type="helix" evidence="14">
    <location>
        <begin position="51"/>
        <end position="60"/>
    </location>
</feature>
<feature type="strand" evidence="14">
    <location>
        <begin position="73"/>
        <end position="79"/>
    </location>
</feature>
<feature type="helix" evidence="14">
    <location>
        <begin position="83"/>
        <end position="87"/>
    </location>
</feature>
<feature type="strand" evidence="14">
    <location>
        <begin position="94"/>
        <end position="96"/>
    </location>
</feature>
<feature type="turn" evidence="14">
    <location>
        <begin position="99"/>
        <end position="101"/>
    </location>
</feature>
<feature type="helix" evidence="14">
    <location>
        <begin position="102"/>
        <end position="105"/>
    </location>
</feature>
<feature type="helix" evidence="14">
    <location>
        <begin position="107"/>
        <end position="118"/>
    </location>
</feature>
<feature type="turn" evidence="14">
    <location>
        <begin position="122"/>
        <end position="124"/>
    </location>
</feature>
<feature type="strand" evidence="14">
    <location>
        <begin position="131"/>
        <end position="133"/>
    </location>
</feature>
<feature type="turn" evidence="14">
    <location>
        <begin position="134"/>
        <end position="136"/>
    </location>
</feature>
<feature type="helix" evidence="14">
    <location>
        <begin position="138"/>
        <end position="150"/>
    </location>
</feature>
<feature type="strand" evidence="14">
    <location>
        <begin position="157"/>
        <end position="160"/>
    </location>
</feature>
<feature type="strand" evidence="14">
    <location>
        <begin position="171"/>
        <end position="173"/>
    </location>
</feature>
<feature type="strand" evidence="14">
    <location>
        <begin position="186"/>
        <end position="189"/>
    </location>
</feature>
<feature type="strand" evidence="14">
    <location>
        <begin position="192"/>
        <end position="194"/>
    </location>
</feature>
<feature type="strand" evidence="14">
    <location>
        <begin position="196"/>
        <end position="199"/>
    </location>
</feature>
<feature type="strand" evidence="14">
    <location>
        <begin position="201"/>
        <end position="212"/>
    </location>
</feature>
<feature type="turn" evidence="14">
    <location>
        <begin position="213"/>
        <end position="216"/>
    </location>
</feature>
<feature type="strand" evidence="14">
    <location>
        <begin position="217"/>
        <end position="228"/>
    </location>
</feature>
<feature type="strand" evidence="14">
    <location>
        <begin position="271"/>
        <end position="273"/>
    </location>
</feature>
<feature type="helix" evidence="14">
    <location>
        <begin position="274"/>
        <end position="283"/>
    </location>
</feature>
<feature type="helix" evidence="14">
    <location>
        <begin position="288"/>
        <end position="317"/>
    </location>
</feature>
<feature type="strand" evidence="14">
    <location>
        <begin position="331"/>
        <end position="340"/>
    </location>
</feature>
<feature type="strand" evidence="14">
    <location>
        <begin position="345"/>
        <end position="353"/>
    </location>
</feature>
<feature type="helix" evidence="14">
    <location>
        <begin position="361"/>
        <end position="378"/>
    </location>
</feature>
<feature type="strand" evidence="14">
    <location>
        <begin position="454"/>
        <end position="459"/>
    </location>
</feature>
<feature type="helix" evidence="14">
    <location>
        <begin position="463"/>
        <end position="483"/>
    </location>
</feature>
<sequence length="887" mass="102999">MPSLPQEGVIQGPSPLDLNTELPYQSTMKRKVRKKKKKGTITANVAGTKFEIVRLVIDEMGFMKTPDEDETSNLIWCDSAVQQEKISELQNYQRINHFPGMGEICRKDFLARNMTKMIKSRPLDYTFVPRTWIFPAEYTQFQNYVKELKKKRKQKTFIVKPANGAMGHGISLIRNGDKLPSQDHLIVQEYIEKPFLMEGYKFDLRIYILVTSCDPLKIFLYHDGLVRMGTEKYIPPNESNLTQLYMHLTNYSVNKHNEHFERDETENKGSKRSIKWFTEFLQANQHDVAKFWSDISELVVKTLIVAEPHVLHAYRMCRPGQPPGSESVCFEVLGFDILLDRKLKPWLLEINRAPSFGTDQKIDYDVKRGVLLNALKLLNIRTSDKRRNLAKQKAEAQRRLYGQNSIKRLLPGSSDWEQQRHQLERRKEELKERLAQVRKQISREEHENRHMGNYRRIYPPEDKALLEKYENLLAVAFQTFLSGRAASFQRELNNPLKRMKEEDILDLLEQCEIDDEKLMGKTTKTRGPKPLCSMPESTEIMKRPKYCSSDSSYDSSSSSSESDENEKEEYQNKKREKQVTYNLKPSNHYKLIQQPSSIRRSVSCPRSISAQSPSSGDTRPFSAQQMISVSRPTSASRSHSLNRASSYMRHLPHSNDACSTNSQVSESLRQLKTKEQEDDLTSQTLFVLKDMKIRFPGKSDAESELLIEDIIDNWKYHKTKVASYWLIKLDSVKQRKVLDIVKTSIRTVLPRIWKVPDVEEVNLYRIFNRVFNRLLWSRGQGLWNCFCDSGSSWESIFNKSPEVVTPLQLQCCQRLVELCKQCLLVVYKYATDKRGSLSGIGPDWGNSRYLLPGSTQFFLRTPTYNLKYNSPGMTRSNVLFTSRYGHL</sequence>
<gene>
    <name evidence="13" type="primary">TTLL7</name>
</gene>
<evidence type="ECO:0000250" key="1">
    <source>
        <dbReference type="UniProtKB" id="A4Q9E8"/>
    </source>
</evidence>
<evidence type="ECO:0000250" key="2">
    <source>
        <dbReference type="UniProtKB" id="A4Q9F0"/>
    </source>
</evidence>
<evidence type="ECO:0000250" key="3">
    <source>
        <dbReference type="UniProtKB" id="F7E540"/>
    </source>
</evidence>
<evidence type="ECO:0000255" key="4">
    <source>
        <dbReference type="PROSITE-ProRule" id="PRU00568"/>
    </source>
</evidence>
<evidence type="ECO:0000256" key="5">
    <source>
        <dbReference type="SAM" id="MobiDB-lite"/>
    </source>
</evidence>
<evidence type="ECO:0000269" key="6">
    <source>
    </source>
</evidence>
<evidence type="ECO:0000269" key="7">
    <source>
    </source>
</evidence>
<evidence type="ECO:0000303" key="8">
    <source>
    </source>
</evidence>
<evidence type="ECO:0000303" key="9">
    <source ref="1"/>
</evidence>
<evidence type="ECO:0000305" key="10"/>
<evidence type="ECO:0000305" key="11">
    <source>
    </source>
</evidence>
<evidence type="ECO:0000305" key="12">
    <source>
    </source>
</evidence>
<evidence type="ECO:0000312" key="13">
    <source>
        <dbReference type="HGNC" id="HGNC:26242"/>
    </source>
</evidence>
<evidence type="ECO:0007829" key="14">
    <source>
        <dbReference type="PDB" id="4YLR"/>
    </source>
</evidence>
<protein>
    <recommendedName>
        <fullName evidence="11">Tubulin polyglutamylase TTLL7</fullName>
        <ecNumber evidence="6 7">6.3.2.-</ecNumber>
    </recommendedName>
    <alternativeName>
        <fullName evidence="9">Testis development protein NYD-SP30</fullName>
    </alternativeName>
    <alternativeName>
        <fullName evidence="12">Tubulin--tyrosine ligase-like protein 7</fullName>
    </alternativeName>
</protein>
<reference key="1">
    <citation type="submission" date="2002-10" db="EMBL/GenBank/DDBJ databases">
        <title>Cloning and identification of a novel gene related to testis development, NYD-SP30.</title>
        <authorList>
            <person name="Xu M."/>
            <person name="Xu Y.Z."/>
            <person name="Li M.J."/>
            <person name="Zhou M.Z."/>
            <person name="Sha H.J."/>
        </authorList>
    </citation>
    <scope>NUCLEOTIDE SEQUENCE [MRNA] (ISOFORM 2)</scope>
    <source>
        <tissue>Testis</tissue>
    </source>
</reference>
<reference key="2">
    <citation type="journal article" date="2004" name="Nat. Genet.">
        <title>Complete sequencing and characterization of 21,243 full-length human cDNAs.</title>
        <authorList>
            <person name="Ota T."/>
            <person name="Suzuki Y."/>
            <person name="Nishikawa T."/>
            <person name="Otsuki T."/>
            <person name="Sugiyama T."/>
            <person name="Irie R."/>
            <person name="Wakamatsu A."/>
            <person name="Hayashi K."/>
            <person name="Sato H."/>
            <person name="Nagai K."/>
            <person name="Kimura K."/>
            <person name="Makita H."/>
            <person name="Sekine M."/>
            <person name="Obayashi M."/>
            <person name="Nishi T."/>
            <person name="Shibahara T."/>
            <person name="Tanaka T."/>
            <person name="Ishii S."/>
            <person name="Yamamoto J."/>
            <person name="Saito K."/>
            <person name="Kawai Y."/>
            <person name="Isono Y."/>
            <person name="Nakamura Y."/>
            <person name="Nagahari K."/>
            <person name="Murakami K."/>
            <person name="Yasuda T."/>
            <person name="Iwayanagi T."/>
            <person name="Wagatsuma M."/>
            <person name="Shiratori A."/>
            <person name="Sudo H."/>
            <person name="Hosoiri T."/>
            <person name="Kaku Y."/>
            <person name="Kodaira H."/>
            <person name="Kondo H."/>
            <person name="Sugawara M."/>
            <person name="Takahashi M."/>
            <person name="Kanda K."/>
            <person name="Yokoi T."/>
            <person name="Furuya T."/>
            <person name="Kikkawa E."/>
            <person name="Omura Y."/>
            <person name="Abe K."/>
            <person name="Kamihara K."/>
            <person name="Katsuta N."/>
            <person name="Sato K."/>
            <person name="Tanikawa M."/>
            <person name="Yamazaki M."/>
            <person name="Ninomiya K."/>
            <person name="Ishibashi T."/>
            <person name="Yamashita H."/>
            <person name="Murakawa K."/>
            <person name="Fujimori K."/>
            <person name="Tanai H."/>
            <person name="Kimata M."/>
            <person name="Watanabe M."/>
            <person name="Hiraoka S."/>
            <person name="Chiba Y."/>
            <person name="Ishida S."/>
            <person name="Ono Y."/>
            <person name="Takiguchi S."/>
            <person name="Watanabe S."/>
            <person name="Yosida M."/>
            <person name="Hotuta T."/>
            <person name="Kusano J."/>
            <person name="Kanehori K."/>
            <person name="Takahashi-Fujii A."/>
            <person name="Hara H."/>
            <person name="Tanase T.-O."/>
            <person name="Nomura Y."/>
            <person name="Togiya S."/>
            <person name="Komai F."/>
            <person name="Hara R."/>
            <person name="Takeuchi K."/>
            <person name="Arita M."/>
            <person name="Imose N."/>
            <person name="Musashino K."/>
            <person name="Yuuki H."/>
            <person name="Oshima A."/>
            <person name="Sasaki N."/>
            <person name="Aotsuka S."/>
            <person name="Yoshikawa Y."/>
            <person name="Matsunawa H."/>
            <person name="Ichihara T."/>
            <person name="Shiohata N."/>
            <person name="Sano S."/>
            <person name="Moriya S."/>
            <person name="Momiyama H."/>
            <person name="Satoh N."/>
            <person name="Takami S."/>
            <person name="Terashima Y."/>
            <person name="Suzuki O."/>
            <person name="Nakagawa S."/>
            <person name="Senoh A."/>
            <person name="Mizoguchi H."/>
            <person name="Goto Y."/>
            <person name="Shimizu F."/>
            <person name="Wakebe H."/>
            <person name="Hishigaki H."/>
            <person name="Watanabe T."/>
            <person name="Sugiyama A."/>
            <person name="Takemoto M."/>
            <person name="Kawakami B."/>
            <person name="Yamazaki M."/>
            <person name="Watanabe K."/>
            <person name="Kumagai A."/>
            <person name="Itakura S."/>
            <person name="Fukuzumi Y."/>
            <person name="Fujimori Y."/>
            <person name="Komiyama M."/>
            <person name="Tashiro H."/>
            <person name="Tanigami A."/>
            <person name="Fujiwara T."/>
            <person name="Ono T."/>
            <person name="Yamada K."/>
            <person name="Fujii Y."/>
            <person name="Ozaki K."/>
            <person name="Hirao M."/>
            <person name="Ohmori Y."/>
            <person name="Kawabata A."/>
            <person name="Hikiji T."/>
            <person name="Kobatake N."/>
            <person name="Inagaki H."/>
            <person name="Ikema Y."/>
            <person name="Okamoto S."/>
            <person name="Okitani R."/>
            <person name="Kawakami T."/>
            <person name="Noguchi S."/>
            <person name="Itoh T."/>
            <person name="Shigeta K."/>
            <person name="Senba T."/>
            <person name="Matsumura K."/>
            <person name="Nakajima Y."/>
            <person name="Mizuno T."/>
            <person name="Morinaga M."/>
            <person name="Sasaki M."/>
            <person name="Togashi T."/>
            <person name="Oyama M."/>
            <person name="Hata H."/>
            <person name="Watanabe M."/>
            <person name="Komatsu T."/>
            <person name="Mizushima-Sugano J."/>
            <person name="Satoh T."/>
            <person name="Shirai Y."/>
            <person name="Takahashi Y."/>
            <person name="Nakagawa K."/>
            <person name="Okumura K."/>
            <person name="Nagase T."/>
            <person name="Nomura N."/>
            <person name="Kikuchi H."/>
            <person name="Masuho Y."/>
            <person name="Yamashita R."/>
            <person name="Nakai K."/>
            <person name="Yada T."/>
            <person name="Nakamura Y."/>
            <person name="Ohara O."/>
            <person name="Isogai T."/>
            <person name="Sugano S."/>
        </authorList>
    </citation>
    <scope>NUCLEOTIDE SEQUENCE [LARGE SCALE MRNA] (ISOFORM 1)</scope>
    <source>
        <tissue>Cerebellum</tissue>
        <tissue>Lung</tissue>
    </source>
</reference>
<reference key="3">
    <citation type="journal article" date="2006" name="Nature">
        <title>The DNA sequence and biological annotation of human chromosome 1.</title>
        <authorList>
            <person name="Gregory S.G."/>
            <person name="Barlow K.F."/>
            <person name="McLay K.E."/>
            <person name="Kaul R."/>
            <person name="Swarbreck D."/>
            <person name="Dunham A."/>
            <person name="Scott C.E."/>
            <person name="Howe K.L."/>
            <person name="Woodfine K."/>
            <person name="Spencer C.C.A."/>
            <person name="Jones M.C."/>
            <person name="Gillson C."/>
            <person name="Searle S."/>
            <person name="Zhou Y."/>
            <person name="Kokocinski F."/>
            <person name="McDonald L."/>
            <person name="Evans R."/>
            <person name="Phillips K."/>
            <person name="Atkinson A."/>
            <person name="Cooper R."/>
            <person name="Jones C."/>
            <person name="Hall R.E."/>
            <person name="Andrews T.D."/>
            <person name="Lloyd C."/>
            <person name="Ainscough R."/>
            <person name="Almeida J.P."/>
            <person name="Ambrose K.D."/>
            <person name="Anderson F."/>
            <person name="Andrew R.W."/>
            <person name="Ashwell R.I.S."/>
            <person name="Aubin K."/>
            <person name="Babbage A.K."/>
            <person name="Bagguley C.L."/>
            <person name="Bailey J."/>
            <person name="Beasley H."/>
            <person name="Bethel G."/>
            <person name="Bird C.P."/>
            <person name="Bray-Allen S."/>
            <person name="Brown J.Y."/>
            <person name="Brown A.J."/>
            <person name="Buckley D."/>
            <person name="Burton J."/>
            <person name="Bye J."/>
            <person name="Carder C."/>
            <person name="Chapman J.C."/>
            <person name="Clark S.Y."/>
            <person name="Clarke G."/>
            <person name="Clee C."/>
            <person name="Cobley V."/>
            <person name="Collier R.E."/>
            <person name="Corby N."/>
            <person name="Coville G.J."/>
            <person name="Davies J."/>
            <person name="Deadman R."/>
            <person name="Dunn M."/>
            <person name="Earthrowl M."/>
            <person name="Ellington A.G."/>
            <person name="Errington H."/>
            <person name="Frankish A."/>
            <person name="Frankland J."/>
            <person name="French L."/>
            <person name="Garner P."/>
            <person name="Garnett J."/>
            <person name="Gay L."/>
            <person name="Ghori M.R.J."/>
            <person name="Gibson R."/>
            <person name="Gilby L.M."/>
            <person name="Gillett W."/>
            <person name="Glithero R.J."/>
            <person name="Grafham D.V."/>
            <person name="Griffiths C."/>
            <person name="Griffiths-Jones S."/>
            <person name="Grocock R."/>
            <person name="Hammond S."/>
            <person name="Harrison E.S.I."/>
            <person name="Hart E."/>
            <person name="Haugen E."/>
            <person name="Heath P.D."/>
            <person name="Holmes S."/>
            <person name="Holt K."/>
            <person name="Howden P.J."/>
            <person name="Hunt A.R."/>
            <person name="Hunt S.E."/>
            <person name="Hunter G."/>
            <person name="Isherwood J."/>
            <person name="James R."/>
            <person name="Johnson C."/>
            <person name="Johnson D."/>
            <person name="Joy A."/>
            <person name="Kay M."/>
            <person name="Kershaw J.K."/>
            <person name="Kibukawa M."/>
            <person name="Kimberley A.M."/>
            <person name="King A."/>
            <person name="Knights A.J."/>
            <person name="Lad H."/>
            <person name="Laird G."/>
            <person name="Lawlor S."/>
            <person name="Leongamornlert D.A."/>
            <person name="Lloyd D.M."/>
            <person name="Loveland J."/>
            <person name="Lovell J."/>
            <person name="Lush M.J."/>
            <person name="Lyne R."/>
            <person name="Martin S."/>
            <person name="Mashreghi-Mohammadi M."/>
            <person name="Matthews L."/>
            <person name="Matthews N.S.W."/>
            <person name="McLaren S."/>
            <person name="Milne S."/>
            <person name="Mistry S."/>
            <person name="Moore M.J.F."/>
            <person name="Nickerson T."/>
            <person name="O'Dell C.N."/>
            <person name="Oliver K."/>
            <person name="Palmeiri A."/>
            <person name="Palmer S.A."/>
            <person name="Parker A."/>
            <person name="Patel D."/>
            <person name="Pearce A.V."/>
            <person name="Peck A.I."/>
            <person name="Pelan S."/>
            <person name="Phelps K."/>
            <person name="Phillimore B.J."/>
            <person name="Plumb R."/>
            <person name="Rajan J."/>
            <person name="Raymond C."/>
            <person name="Rouse G."/>
            <person name="Saenphimmachak C."/>
            <person name="Sehra H.K."/>
            <person name="Sheridan E."/>
            <person name="Shownkeen R."/>
            <person name="Sims S."/>
            <person name="Skuce C.D."/>
            <person name="Smith M."/>
            <person name="Steward C."/>
            <person name="Subramanian S."/>
            <person name="Sycamore N."/>
            <person name="Tracey A."/>
            <person name="Tromans A."/>
            <person name="Van Helmond Z."/>
            <person name="Wall M."/>
            <person name="Wallis J.M."/>
            <person name="White S."/>
            <person name="Whitehead S.L."/>
            <person name="Wilkinson J.E."/>
            <person name="Willey D.L."/>
            <person name="Williams H."/>
            <person name="Wilming L."/>
            <person name="Wray P.W."/>
            <person name="Wu Z."/>
            <person name="Coulson A."/>
            <person name="Vaudin M."/>
            <person name="Sulston J.E."/>
            <person name="Durbin R.M."/>
            <person name="Hubbard T."/>
            <person name="Wooster R."/>
            <person name="Dunham I."/>
            <person name="Carter N.P."/>
            <person name="McVean G."/>
            <person name="Ross M.T."/>
            <person name="Harrow J."/>
            <person name="Olson M.V."/>
            <person name="Beck S."/>
            <person name="Rogers J."/>
            <person name="Bentley D.R."/>
        </authorList>
    </citation>
    <scope>NUCLEOTIDE SEQUENCE [LARGE SCALE GENOMIC DNA]</scope>
</reference>
<reference key="4">
    <citation type="journal article" date="2004" name="Genome Res.">
        <title>The status, quality, and expansion of the NIH full-length cDNA project: the Mammalian Gene Collection (MGC).</title>
        <authorList>
            <consortium name="The MGC Project Team"/>
        </authorList>
    </citation>
    <scope>NUCLEOTIDE SEQUENCE [LARGE SCALE MRNA] (ISOFORM 3)</scope>
    <source>
        <tissue>Testis</tissue>
    </source>
</reference>
<reference key="5">
    <citation type="journal article" date="2006" name="J. Biol. Chem.">
        <title>TTLL7 is a mammalian beta-tubulin polyglutamylase required for growth of MAP2-positive neurites.</title>
        <authorList>
            <person name="Ikegami K."/>
            <person name="Mukai M."/>
            <person name="Tsuchida J."/>
            <person name="Heier R.L."/>
            <person name="Macgregor G.R."/>
            <person name="Setou M."/>
        </authorList>
    </citation>
    <scope>FUNCTION</scope>
    <scope>CATALYTIC ACTIVITY</scope>
    <scope>TISSUE SPECIFICITY</scope>
</reference>
<reference key="6">
    <citation type="journal article" date="2015" name="Cell">
        <title>Multivalent microtubule recognition by tubulin tyrosine ligase-like family glutamylases.</title>
        <authorList>
            <person name="Garnham C.P."/>
            <person name="Vemu A."/>
            <person name="Wilson-Kubalek E.M."/>
            <person name="Yu I."/>
            <person name="Szyk A."/>
            <person name="Lander G.C."/>
            <person name="Milligan R.A."/>
            <person name="Roll-Mecak A."/>
        </authorList>
    </citation>
    <scope>X-RAY CRYSTALLOGRAPHY (2.6 ANGSTROMS) OF 36-518 OF MUTANT GLN-349 IN COMPLEX WITH ADP</scope>
    <scope>FUNCTION</scope>
    <scope>CATALYTIC ACTIVITY</scope>
    <scope>SUBUNIT</scope>
    <scope>DOMAIN</scope>
    <scope>MUTAGENESIS OF ARG-106; 143-ASN--LYS-146; LYS-178; ARG-205; ARG-227; LYS-271; GLU-349; ARG-352; 385-LYS--LYS-393; 425-ARG--LYS-427 AND 477-PHE--PHE-480</scope>
</reference>
<accession>Q6ZT98</accession>
<accession>Q5TAX8</accession>
<accession>Q5TAX9</accession>
<accession>Q6P990</accession>
<accession>Q86YS1</accession>
<accession>Q9H5U4</accession>
<organism>
    <name type="scientific">Homo sapiens</name>
    <name type="common">Human</name>
    <dbReference type="NCBI Taxonomy" id="9606"/>
    <lineage>
        <taxon>Eukaryota</taxon>
        <taxon>Metazoa</taxon>
        <taxon>Chordata</taxon>
        <taxon>Craniata</taxon>
        <taxon>Vertebrata</taxon>
        <taxon>Euteleostomi</taxon>
        <taxon>Mammalia</taxon>
        <taxon>Eutheria</taxon>
        <taxon>Euarchontoglires</taxon>
        <taxon>Primates</taxon>
        <taxon>Haplorrhini</taxon>
        <taxon>Catarrhini</taxon>
        <taxon>Hominidae</taxon>
        <taxon>Homo</taxon>
    </lineage>
</organism>
<name>TTLL7_HUMAN</name>
<comment type="function">
    <text evidence="2 3 6 7">Polyglutamylase which modifies tubulin, generating polyglutamate side chains of variable lengths on the gamma-carboxyl group of specific glutamate residues within the C-terminal tail of tubulin (PubMed:16901895, PubMed:25959773). Mediates both ATP-dependent initiation and elongation steps of the polyglutamylation reaction (PubMed:16901895, PubMed:25959773). Preferentially modifies the beta-tubulin tail over an alpha-tail (PubMed:16901895, PubMed:25959773). Competes with monoglycylase TTLL3 for modification site on beta-tubulin substrate, thereby creating an anticorrelation between glycylation and glutamylation reactions (By similarity). Required for neurite growth; responsible for the strong increase in tubulin polyglutamylation during postnatal neuronal maturation (By similarity).</text>
</comment>
<comment type="catalytic activity">
    <molecule>Tubulin polyglutamylase TTLL7</molecule>
    <reaction evidence="6 7">
        <text>L-glutamyl-[protein] + L-glutamate + ATP = gamma-L-glutamyl-L-glutamyl-[protein] + ADP + phosphate + H(+)</text>
        <dbReference type="Rhea" id="RHEA:60144"/>
        <dbReference type="Rhea" id="RHEA-COMP:10208"/>
        <dbReference type="Rhea" id="RHEA-COMP:15517"/>
        <dbReference type="ChEBI" id="CHEBI:15378"/>
        <dbReference type="ChEBI" id="CHEBI:29973"/>
        <dbReference type="ChEBI" id="CHEBI:29985"/>
        <dbReference type="ChEBI" id="CHEBI:30616"/>
        <dbReference type="ChEBI" id="CHEBI:43474"/>
        <dbReference type="ChEBI" id="CHEBI:143622"/>
        <dbReference type="ChEBI" id="CHEBI:456216"/>
    </reaction>
    <physiologicalReaction direction="left-to-right" evidence="11 12">
        <dbReference type="Rhea" id="RHEA:60145"/>
    </physiologicalReaction>
</comment>
<comment type="catalytic activity">
    <molecule>Tubulin polyglutamylase TTLL7</molecule>
    <reaction evidence="6 7">
        <text>(L-glutamyl)(n)-gamma-L-glutamyl-L-glutamyl-[protein] + L-glutamate + ATP = (L-glutamyl)(n+1)-gamma-L-glutamyl-L-glutamyl-[protein] + ADP + phosphate + H(+)</text>
        <dbReference type="Rhea" id="RHEA:60148"/>
        <dbReference type="Rhea" id="RHEA-COMP:15519"/>
        <dbReference type="Rhea" id="RHEA-COMP:15675"/>
        <dbReference type="ChEBI" id="CHEBI:15378"/>
        <dbReference type="ChEBI" id="CHEBI:29985"/>
        <dbReference type="ChEBI" id="CHEBI:30616"/>
        <dbReference type="ChEBI" id="CHEBI:43474"/>
        <dbReference type="ChEBI" id="CHEBI:143623"/>
        <dbReference type="ChEBI" id="CHEBI:456216"/>
    </reaction>
    <physiologicalReaction direction="left-to-right" evidence="11 12">
        <dbReference type="Rhea" id="RHEA:60149"/>
    </physiologicalReaction>
</comment>
<comment type="cofactor">
    <cofactor evidence="1">
        <name>Mg(2+)</name>
        <dbReference type="ChEBI" id="CHEBI:18420"/>
    </cofactor>
</comment>
<comment type="subunit">
    <text evidence="7">Interacts with both alpha- and beta-tubulin (via C-terminal tubulin tails).</text>
</comment>
<comment type="interaction">
    <interactant intactId="EBI-13339851">
        <id>Q6ZT98-3</id>
    </interactant>
    <interactant intactId="EBI-2798728">
        <id>P61968</id>
        <label>LMO4</label>
    </interactant>
    <organismsDiffer>false</organismsDiffer>
    <experiments>3</experiments>
</comment>
<comment type="subcellular location">
    <subcellularLocation>
        <location evidence="2">Cell projection</location>
        <location evidence="2">Cilium</location>
    </subcellularLocation>
    <subcellularLocation>
        <location evidence="2">Cytoplasm</location>
        <location evidence="2">Cytoskeleton</location>
        <location evidence="2">Cilium basal body</location>
    </subcellularLocation>
    <subcellularLocation>
        <location evidence="2">Cell projection</location>
        <location evidence="2">Dendrite</location>
    </subcellularLocation>
    <subcellularLocation>
        <location evidence="2">Perikaryon</location>
    </subcellularLocation>
    <text evidence="2">In cells with primary cilia, found in both cilia and basal bodies. In neuronal cells, found in dendrites and perikaryon.</text>
</comment>
<comment type="alternative products">
    <event type="alternative splicing"/>
    <isoform>
        <id>Q6ZT98-1</id>
        <name>1</name>
        <sequence type="displayed"/>
    </isoform>
    <isoform>
        <id>Q6ZT98-2</id>
        <name>2</name>
        <sequence type="described" ref="VSP_015199 VSP_015200"/>
    </isoform>
    <isoform>
        <id>Q6ZT98-3</id>
        <name>3</name>
        <sequence type="described" ref="VSP_015201 VSP_015202"/>
    </isoform>
</comment>
<comment type="tissue specificity">
    <text evidence="6">Highly expressed in the nervous system including spinal cord, thalamus, hippocampus, hypothalamus and cerebellum.</text>
</comment>
<comment type="domain">
    <text evidence="7">The enzyme uses its core to engage the disordered anionic tails of alpha- and beta-tubulin and the flexible c-MTBD (cationic microtubule binding domain) region to bind the microtubule and position itself for beta-tail modification. The c-MTBD region is positively charged and becomes ordered when bound to microtubules: it interacts with a negatively charged patch on alpha-tubulin. The presence of positive charges in the c-MTBD region is essential for proper binding.</text>
</comment>
<comment type="similarity">
    <text evidence="10">Belongs to the tubulin--tyrosine ligase family.</text>
</comment>
<dbReference type="EC" id="6.3.2.-" evidence="6 7"/>
<dbReference type="EMBL" id="AY170843">
    <property type="protein sequence ID" value="AAO37763.1"/>
    <property type="molecule type" value="mRNA"/>
</dbReference>
<dbReference type="EMBL" id="AK026686">
    <property type="protein sequence ID" value="BAB15526.1"/>
    <property type="molecule type" value="mRNA"/>
</dbReference>
<dbReference type="EMBL" id="AK126792">
    <property type="protein sequence ID" value="BAC86695.1"/>
    <property type="molecule type" value="mRNA"/>
</dbReference>
<dbReference type="EMBL" id="AC104454">
    <property type="status" value="NOT_ANNOTATED_CDS"/>
    <property type="molecule type" value="Genomic_DNA"/>
</dbReference>
<dbReference type="EMBL" id="AL138844">
    <property type="status" value="NOT_ANNOTATED_CDS"/>
    <property type="molecule type" value="Genomic_DNA"/>
</dbReference>
<dbReference type="EMBL" id="BC060878">
    <property type="protein sequence ID" value="AAH60878.1"/>
    <property type="molecule type" value="mRNA"/>
</dbReference>
<dbReference type="CCDS" id="CCDS690.2">
    <molecule id="Q6ZT98-1"/>
</dbReference>
<dbReference type="RefSeq" id="NP_001337143.1">
    <molecule id="Q6ZT98-1"/>
    <property type="nucleotide sequence ID" value="NM_001350214.2"/>
</dbReference>
<dbReference type="RefSeq" id="NP_078962.4">
    <molecule id="Q6ZT98-1"/>
    <property type="nucleotide sequence ID" value="NM_024686.4"/>
</dbReference>
<dbReference type="RefSeq" id="XP_016857836.1">
    <property type="nucleotide sequence ID" value="XM_017002347.1"/>
</dbReference>
<dbReference type="RefSeq" id="XP_047286636.1">
    <molecule id="Q6ZT98-3"/>
    <property type="nucleotide sequence ID" value="XM_047430680.1"/>
</dbReference>
<dbReference type="RefSeq" id="XP_047286642.1">
    <molecule id="Q6ZT98-2"/>
    <property type="nucleotide sequence ID" value="XM_047430686.1"/>
</dbReference>
<dbReference type="RefSeq" id="XP_054194738.1">
    <molecule id="Q6ZT98-3"/>
    <property type="nucleotide sequence ID" value="XM_054338763.1"/>
</dbReference>
<dbReference type="RefSeq" id="XP_054194739.1">
    <molecule id="Q6ZT98-2"/>
    <property type="nucleotide sequence ID" value="XM_054338764.1"/>
</dbReference>
<dbReference type="PDB" id="4YLR">
    <property type="method" value="X-ray"/>
    <property type="resolution" value="2.55 A"/>
    <property type="chains" value="A=36-518"/>
</dbReference>
<dbReference type="PDB" id="4YLS">
    <property type="method" value="X-ray"/>
    <property type="resolution" value="2.60 A"/>
    <property type="chains" value="A=36-518"/>
</dbReference>
<dbReference type="PDBsum" id="4YLR"/>
<dbReference type="PDBsum" id="4YLS"/>
<dbReference type="SMR" id="Q6ZT98"/>
<dbReference type="BioGRID" id="122852">
    <property type="interactions" value="17"/>
</dbReference>
<dbReference type="FunCoup" id="Q6ZT98">
    <property type="interactions" value="354"/>
</dbReference>
<dbReference type="IntAct" id="Q6ZT98">
    <property type="interactions" value="11"/>
</dbReference>
<dbReference type="MINT" id="Q6ZT98"/>
<dbReference type="STRING" id="9606.ENSP00000260505"/>
<dbReference type="iPTMnet" id="Q6ZT98"/>
<dbReference type="PhosphoSitePlus" id="Q6ZT98"/>
<dbReference type="BioMuta" id="TTLL7"/>
<dbReference type="DMDM" id="73920151"/>
<dbReference type="jPOST" id="Q6ZT98"/>
<dbReference type="MassIVE" id="Q6ZT98"/>
<dbReference type="PaxDb" id="9606-ENSP00000260505"/>
<dbReference type="PeptideAtlas" id="Q6ZT98"/>
<dbReference type="ProteomicsDB" id="68266">
    <molecule id="Q6ZT98-1"/>
</dbReference>
<dbReference type="ProteomicsDB" id="68267">
    <molecule id="Q6ZT98-2"/>
</dbReference>
<dbReference type="ProteomicsDB" id="68268">
    <molecule id="Q6ZT98-3"/>
</dbReference>
<dbReference type="TopDownProteomics" id="Q6ZT98-2">
    <molecule id="Q6ZT98-2"/>
</dbReference>
<dbReference type="Antibodypedia" id="53234">
    <property type="antibodies" value="33 antibodies from 11 providers"/>
</dbReference>
<dbReference type="DNASU" id="79739"/>
<dbReference type="Ensembl" id="ENST00000260505.13">
    <molecule id="Q6ZT98-1"/>
    <property type="protein sequence ID" value="ENSP00000260505.8"/>
    <property type="gene ID" value="ENSG00000137941.17"/>
</dbReference>
<dbReference type="Ensembl" id="ENST00000480174.5">
    <molecule id="Q6ZT98-2"/>
    <property type="protein sequence ID" value="ENSP00000435334.1"/>
    <property type="gene ID" value="ENSG00000137941.17"/>
</dbReference>
<dbReference type="GeneID" id="79739"/>
<dbReference type="KEGG" id="hsa:79739"/>
<dbReference type="MANE-Select" id="ENST00000260505.13">
    <property type="protein sequence ID" value="ENSP00000260505.8"/>
    <property type="RefSeq nucleotide sequence ID" value="NM_024686.6"/>
    <property type="RefSeq protein sequence ID" value="NP_078962.4"/>
</dbReference>
<dbReference type="UCSC" id="uc001djc.4">
    <molecule id="Q6ZT98-1"/>
    <property type="organism name" value="human"/>
</dbReference>
<dbReference type="AGR" id="HGNC:26242"/>
<dbReference type="CTD" id="79739"/>
<dbReference type="DisGeNET" id="79739"/>
<dbReference type="GeneCards" id="TTLL7"/>
<dbReference type="HGNC" id="HGNC:26242">
    <property type="gene designation" value="TTLL7"/>
</dbReference>
<dbReference type="HPA" id="ENSG00000137941">
    <property type="expression patterns" value="Tissue enhanced (brain)"/>
</dbReference>
<dbReference type="MIM" id="618813">
    <property type="type" value="gene"/>
</dbReference>
<dbReference type="neXtProt" id="NX_Q6ZT98"/>
<dbReference type="OpenTargets" id="ENSG00000137941"/>
<dbReference type="PharmGKB" id="PA142670678"/>
<dbReference type="VEuPathDB" id="HostDB:ENSG00000137941"/>
<dbReference type="eggNOG" id="KOG2158">
    <property type="taxonomic scope" value="Eukaryota"/>
</dbReference>
<dbReference type="GeneTree" id="ENSGT00940000159078"/>
<dbReference type="HOGENOM" id="CLU_010131_7_1_1"/>
<dbReference type="InParanoid" id="Q6ZT98"/>
<dbReference type="OMA" id="MNCCRRI"/>
<dbReference type="OrthoDB" id="202825at2759"/>
<dbReference type="PAN-GO" id="Q6ZT98">
    <property type="GO annotations" value="5 GO annotations based on evolutionary models"/>
</dbReference>
<dbReference type="PhylomeDB" id="Q6ZT98"/>
<dbReference type="TreeFam" id="TF313087"/>
<dbReference type="BRENDA" id="6.3.2.B24">
    <property type="organism ID" value="2681"/>
</dbReference>
<dbReference type="PathwayCommons" id="Q6ZT98"/>
<dbReference type="Reactome" id="R-HSA-8955332">
    <property type="pathway name" value="Carboxyterminal post-translational modifications of tubulin"/>
</dbReference>
<dbReference type="SignaLink" id="Q6ZT98"/>
<dbReference type="BioGRID-ORCS" id="79739">
    <property type="hits" value="6 hits in 1149 CRISPR screens"/>
</dbReference>
<dbReference type="ChiTaRS" id="TTLL7">
    <property type="organism name" value="human"/>
</dbReference>
<dbReference type="EvolutionaryTrace" id="Q6ZT98"/>
<dbReference type="GenomeRNAi" id="79739"/>
<dbReference type="Pharos" id="Q6ZT98">
    <property type="development level" value="Tbio"/>
</dbReference>
<dbReference type="PRO" id="PR:Q6ZT98"/>
<dbReference type="Proteomes" id="UP000005640">
    <property type="component" value="Chromosome 1"/>
</dbReference>
<dbReference type="RNAct" id="Q6ZT98">
    <property type="molecule type" value="protein"/>
</dbReference>
<dbReference type="Bgee" id="ENSG00000137941">
    <property type="expression patterns" value="Expressed in corpus callosum and 154 other cell types or tissues"/>
</dbReference>
<dbReference type="ExpressionAtlas" id="Q6ZT98">
    <property type="expression patterns" value="baseline and differential"/>
</dbReference>
<dbReference type="GO" id="GO:0036064">
    <property type="term" value="C:ciliary basal body"/>
    <property type="evidence" value="ECO:0000318"/>
    <property type="project" value="GO_Central"/>
</dbReference>
<dbReference type="GO" id="GO:0005829">
    <property type="term" value="C:cytosol"/>
    <property type="evidence" value="ECO:0000304"/>
    <property type="project" value="Reactome"/>
</dbReference>
<dbReference type="GO" id="GO:0030425">
    <property type="term" value="C:dendrite"/>
    <property type="evidence" value="ECO:0007669"/>
    <property type="project" value="UniProtKB-SubCell"/>
</dbReference>
<dbReference type="GO" id="GO:0005874">
    <property type="term" value="C:microtubule"/>
    <property type="evidence" value="ECO:0007669"/>
    <property type="project" value="UniProtKB-KW"/>
</dbReference>
<dbReference type="GO" id="GO:0043204">
    <property type="term" value="C:perikaryon"/>
    <property type="evidence" value="ECO:0007669"/>
    <property type="project" value="UniProtKB-SubCell"/>
</dbReference>
<dbReference type="GO" id="GO:0043014">
    <property type="term" value="F:alpha-tubulin binding"/>
    <property type="evidence" value="ECO:0000314"/>
    <property type="project" value="UniProtKB"/>
</dbReference>
<dbReference type="GO" id="GO:0005524">
    <property type="term" value="F:ATP binding"/>
    <property type="evidence" value="ECO:0007669"/>
    <property type="project" value="UniProtKB-KW"/>
</dbReference>
<dbReference type="GO" id="GO:0048487">
    <property type="term" value="F:beta-tubulin binding"/>
    <property type="evidence" value="ECO:0000314"/>
    <property type="project" value="UniProtKB"/>
</dbReference>
<dbReference type="GO" id="GO:0046872">
    <property type="term" value="F:metal ion binding"/>
    <property type="evidence" value="ECO:0007669"/>
    <property type="project" value="UniProtKB-KW"/>
</dbReference>
<dbReference type="GO" id="GO:0106438">
    <property type="term" value="F:protein-glutamic acid ligase activity, elongating"/>
    <property type="evidence" value="ECO:0007669"/>
    <property type="project" value="RHEA"/>
</dbReference>
<dbReference type="GO" id="GO:0106437">
    <property type="term" value="F:protein-glutamic acid ligase activity, initiating"/>
    <property type="evidence" value="ECO:0007669"/>
    <property type="project" value="RHEA"/>
</dbReference>
<dbReference type="GO" id="GO:0015631">
    <property type="term" value="F:tubulin binding"/>
    <property type="evidence" value="ECO:0000318"/>
    <property type="project" value="GO_Central"/>
</dbReference>
<dbReference type="GO" id="GO:0070740">
    <property type="term" value="F:tubulin-glutamic acid ligase activity"/>
    <property type="evidence" value="ECO:0000314"/>
    <property type="project" value="UniProtKB"/>
</dbReference>
<dbReference type="GO" id="GO:0030154">
    <property type="term" value="P:cell differentiation"/>
    <property type="evidence" value="ECO:0007669"/>
    <property type="project" value="UniProtKB-KW"/>
</dbReference>
<dbReference type="GO" id="GO:0000226">
    <property type="term" value="P:microtubule cytoskeleton organization"/>
    <property type="evidence" value="ECO:0000318"/>
    <property type="project" value="GO_Central"/>
</dbReference>
<dbReference type="GO" id="GO:0007399">
    <property type="term" value="P:nervous system development"/>
    <property type="evidence" value="ECO:0007669"/>
    <property type="project" value="UniProtKB-KW"/>
</dbReference>
<dbReference type="GO" id="GO:0018095">
    <property type="term" value="P:protein polyglutamylation"/>
    <property type="evidence" value="ECO:0000314"/>
    <property type="project" value="UniProtKB"/>
</dbReference>
<dbReference type="FunFam" id="3.30.470.20:FF:000009">
    <property type="entry name" value="tubulin polyglutamylase TTLL5 isoform X1"/>
    <property type="match status" value="1"/>
</dbReference>
<dbReference type="Gene3D" id="3.30.470.20">
    <property type="entry name" value="ATP-grasp fold, B domain"/>
    <property type="match status" value="1"/>
</dbReference>
<dbReference type="InterPro" id="IPR004344">
    <property type="entry name" value="TTL/TTLL_fam"/>
</dbReference>
<dbReference type="PANTHER" id="PTHR12241">
    <property type="entry name" value="TUBULIN POLYGLUTAMYLASE"/>
    <property type="match status" value="1"/>
</dbReference>
<dbReference type="PANTHER" id="PTHR12241:SF147">
    <property type="entry name" value="TUBULIN POLYGLUTAMYLASE TTLL7"/>
    <property type="match status" value="1"/>
</dbReference>
<dbReference type="Pfam" id="PF03133">
    <property type="entry name" value="TTL"/>
    <property type="match status" value="1"/>
</dbReference>
<dbReference type="SUPFAM" id="SSF56059">
    <property type="entry name" value="Glutathione synthetase ATP-binding domain-like"/>
    <property type="match status" value="1"/>
</dbReference>
<dbReference type="PROSITE" id="PS51221">
    <property type="entry name" value="TTL"/>
    <property type="match status" value="1"/>
</dbReference>
<proteinExistence type="evidence at protein level"/>